<keyword id="KW-0002">3D-structure</keyword>
<keyword id="KW-0053">Apoptosis</keyword>
<keyword id="KW-1003">Cell membrane</keyword>
<keyword id="KW-0472">Membrane</keyword>
<keyword id="KW-0539">Nucleus</keyword>
<keyword id="KW-1267">Proteomics identification</keyword>
<keyword id="KW-1185">Reference proteome</keyword>
<keyword id="KW-0812">Transmembrane</keyword>
<keyword id="KW-1133">Transmembrane helix</keyword>
<keyword id="KW-0813">Transport</keyword>
<proteinExistence type="evidence at protein level"/>
<name>MFS10_HUMAN</name>
<accession>Q14728</accession>
<accession>Q07706</accession>
<sequence length="455" mass="48339">MGWGGGGGCTPRPPIHQQPPERRVVTVVFLGLLLDLLAFTLLLPLLPGLLESHGRAHDPLYGSWQGGVDWFATAIGMPVEKRYNSVLFGGLIGSAFSVLQFLCAPLTGATSDCLGRRPVMLLCLMGVATSYAVWATSRSFAAFLASRLIGGISKGNVSLSTAIVADLGSPLARSQGMAVIGVAFSLGFTLGPMLGASLPLEMAPWFALLFAASDLLFIFCFLPETLPLEKRAPSIALGFRDAADLLSPLALLRFSAVARGQDPPSGDRLSSLRRLGLVYFLYLFLFSGLEYTLSFLTHQRFQFSSLQQGKMFFLIGLTMATIQGAYARRIHPGGEVAAVKRALLLLVPAFLLIGWGRSLPVLGLGLLLYSFAAAVVVPCLSSVVAGYGSPGQKGTVMGTLRSLGALARAAGPLVAASVYWLAGAQACFTTWSGLFLLPFFLLQKLSYPAQTLKAE</sequence>
<gene>
    <name type="primary">MFSD10</name>
    <name type="synonym">TETRAN</name>
</gene>
<organism>
    <name type="scientific">Homo sapiens</name>
    <name type="common">Human</name>
    <dbReference type="NCBI Taxonomy" id="9606"/>
    <lineage>
        <taxon>Eukaryota</taxon>
        <taxon>Metazoa</taxon>
        <taxon>Chordata</taxon>
        <taxon>Craniata</taxon>
        <taxon>Vertebrata</taxon>
        <taxon>Euteleostomi</taxon>
        <taxon>Mammalia</taxon>
        <taxon>Eutheria</taxon>
        <taxon>Euarchontoglires</taxon>
        <taxon>Primates</taxon>
        <taxon>Haplorrhini</taxon>
        <taxon>Catarrhini</taxon>
        <taxon>Hominidae</taxon>
        <taxon>Homo</taxon>
    </lineage>
</organism>
<feature type="chain" id="PRO_0000324658" description="Major facilitator superfamily domain-containing protein 10">
    <location>
        <begin position="1"/>
        <end position="455"/>
    </location>
</feature>
<feature type="transmembrane region" description="Helical" evidence="2">
    <location>
        <begin position="27"/>
        <end position="47"/>
    </location>
</feature>
<feature type="transmembrane region" description="Helical" evidence="2">
    <location>
        <begin position="86"/>
        <end position="106"/>
    </location>
</feature>
<feature type="transmembrane region" description="Helical" evidence="2">
    <location>
        <begin position="113"/>
        <end position="135"/>
    </location>
</feature>
<feature type="transmembrane region" description="Helical" evidence="2">
    <location>
        <begin position="148"/>
        <end position="168"/>
    </location>
</feature>
<feature type="transmembrane region" description="Helical" evidence="2">
    <location>
        <begin position="176"/>
        <end position="196"/>
    </location>
</feature>
<feature type="transmembrane region" description="Helical" evidence="2">
    <location>
        <begin position="202"/>
        <end position="222"/>
    </location>
</feature>
<feature type="transmembrane region" description="Helical" evidence="2">
    <location>
        <begin position="275"/>
        <end position="295"/>
    </location>
</feature>
<feature type="transmembrane region" description="Helical" evidence="2">
    <location>
        <begin position="310"/>
        <end position="327"/>
    </location>
</feature>
<feature type="transmembrane region" description="Helical" evidence="2">
    <location>
        <begin position="336"/>
        <end position="356"/>
    </location>
</feature>
<feature type="transmembrane region" description="Helical" evidence="2">
    <location>
        <begin position="359"/>
        <end position="379"/>
    </location>
</feature>
<feature type="transmembrane region" description="Helical" evidence="2">
    <location>
        <begin position="421"/>
        <end position="441"/>
    </location>
</feature>
<feature type="sequence conflict" description="In Ref. 1; AAA36729." evidence="5" ref="1">
    <original>T</original>
    <variation>I</variation>
    <location>
        <position position="26"/>
    </location>
</feature>
<feature type="helix" evidence="13">
    <location>
        <begin position="20"/>
        <end position="40"/>
    </location>
</feature>
<feature type="helix" evidence="13">
    <location>
        <begin position="41"/>
        <end position="45"/>
    </location>
</feature>
<feature type="helix" evidence="13">
    <location>
        <begin position="46"/>
        <end position="55"/>
    </location>
</feature>
<feature type="helix" evidence="13">
    <location>
        <begin position="59"/>
        <end position="75"/>
    </location>
</feature>
<feature type="helix" evidence="13">
    <location>
        <begin position="81"/>
        <end position="114"/>
    </location>
</feature>
<feature type="helix" evidence="13">
    <location>
        <begin position="116"/>
        <end position="136"/>
    </location>
</feature>
<feature type="helix" evidence="13">
    <location>
        <begin position="140"/>
        <end position="152"/>
    </location>
</feature>
<feature type="helix" evidence="13">
    <location>
        <begin position="155"/>
        <end position="165"/>
    </location>
</feature>
<feature type="strand" evidence="13">
    <location>
        <begin position="167"/>
        <end position="169"/>
    </location>
</feature>
<feature type="helix" evidence="13">
    <location>
        <begin position="170"/>
        <end position="197"/>
    </location>
</feature>
<feature type="helix" evidence="13">
    <location>
        <begin position="200"/>
        <end position="202"/>
    </location>
</feature>
<feature type="helix" evidence="13">
    <location>
        <begin position="203"/>
        <end position="221"/>
    </location>
</feature>
<feature type="helix" evidence="13">
    <location>
        <begin position="228"/>
        <end position="230"/>
    </location>
</feature>
<feature type="helix" evidence="13">
    <location>
        <begin position="239"/>
        <end position="244"/>
    </location>
</feature>
<feature type="helix" evidence="13">
    <location>
        <begin position="248"/>
        <end position="252"/>
    </location>
</feature>
<feature type="helix" evidence="13">
    <location>
        <begin position="255"/>
        <end position="258"/>
    </location>
</feature>
<feature type="strand" evidence="13">
    <location>
        <begin position="260"/>
        <end position="262"/>
    </location>
</feature>
<feature type="helix" evidence="13">
    <location>
        <begin position="266"/>
        <end position="301"/>
    </location>
</feature>
<feature type="helix" evidence="13">
    <location>
        <begin position="305"/>
        <end position="325"/>
    </location>
</feature>
<feature type="helix" evidence="13">
    <location>
        <begin position="327"/>
        <end position="329"/>
    </location>
</feature>
<feature type="helix" evidence="13">
    <location>
        <begin position="335"/>
        <end position="355"/>
    </location>
</feature>
<feature type="helix" evidence="13">
    <location>
        <begin position="359"/>
        <end position="385"/>
    </location>
</feature>
<feature type="helix" evidence="13">
    <location>
        <begin position="390"/>
        <end position="392"/>
    </location>
</feature>
<feature type="helix" evidence="13">
    <location>
        <begin position="393"/>
        <end position="422"/>
    </location>
</feature>
<feature type="helix" evidence="13">
    <location>
        <begin position="424"/>
        <end position="434"/>
    </location>
</feature>
<feature type="helix" evidence="13">
    <location>
        <begin position="436"/>
        <end position="442"/>
    </location>
</feature>
<evidence type="ECO:0000250" key="1">
    <source>
        <dbReference type="UniProtKB" id="Q9D2V8"/>
    </source>
</evidence>
<evidence type="ECO:0000255" key="2"/>
<evidence type="ECO:0000269" key="3">
    <source>
    </source>
</evidence>
<evidence type="ECO:0000269" key="4">
    <source>
    </source>
</evidence>
<evidence type="ECO:0000305" key="5"/>
<evidence type="ECO:0000305" key="6">
    <source>
    </source>
</evidence>
<evidence type="ECO:0000312" key="7">
    <source>
        <dbReference type="EMBL" id="AAA36729.1"/>
    </source>
</evidence>
<evidence type="ECO:0000312" key="8">
    <source>
        <dbReference type="EMBL" id="AAH01502.1"/>
    </source>
</evidence>
<evidence type="ECO:0000312" key="9">
    <source>
        <dbReference type="EMBL" id="AAH14979.1"/>
    </source>
</evidence>
<evidence type="ECO:0000312" key="10">
    <source>
        <dbReference type="EMBL" id="AL390065"/>
    </source>
</evidence>
<evidence type="ECO:0000312" key="11">
    <source>
        <dbReference type="EMBL" id="EAW82496.1"/>
    </source>
</evidence>
<evidence type="ECO:0007744" key="12">
    <source>
        <dbReference type="PDB" id="6S4M"/>
    </source>
</evidence>
<evidence type="ECO:0007829" key="13">
    <source>
        <dbReference type="PDB" id="6S4M"/>
    </source>
</evidence>
<comment type="function">
    <text evidence="3 4">Probable organic anion transporter which may serve as a transporter for some non-steroidal anti-inflammatory drugs (NSAIDs) as well as other organic anions across the luminal membranes of renal proximal tubules at the final excretion step into the urine.</text>
</comment>
<comment type="biophysicochemical properties">
    <kinetics>
        <KM evidence="4">13 uM for fluorescein</KM>
        <Vmax evidence="4">75.0 pmol/min/mg enzyme</Vmax>
    </kinetics>
</comment>
<comment type="interaction">
    <interactant intactId="EBI-11337904">
        <id>Q14728</id>
    </interactant>
    <interactant intactId="EBI-78219">
        <id>P45973</id>
        <label>CBX5</label>
    </interactant>
    <organismsDiffer>false</organismsDiffer>
    <experiments>3</experiments>
</comment>
<comment type="interaction">
    <interactant intactId="EBI-11337904">
        <id>Q14728</id>
    </interactant>
    <interactant intactId="EBI-2432309">
        <id>Q92876</id>
        <label>KLK6</label>
    </interactant>
    <organismsDiffer>false</organismsDiffer>
    <experiments>3</experiments>
</comment>
<comment type="interaction">
    <interactant intactId="EBI-11337904">
        <id>Q14728</id>
    </interactant>
    <interactant intactId="EBI-716404">
        <id>P16284</id>
        <label>PECAM1</label>
    </interactant>
    <organismsDiffer>false</organismsDiffer>
    <experiments>3</experiments>
</comment>
<comment type="interaction">
    <interactant intactId="EBI-11337904">
        <id>Q14728</id>
    </interactant>
    <interactant intactId="EBI-296151">
        <id>P37173</id>
        <label>TGFBR2</label>
    </interactant>
    <organismsDiffer>false</organismsDiffer>
    <experiments>3</experiments>
</comment>
<comment type="subcellular location">
    <subcellularLocation>
        <location evidence="1">Nucleus inner membrane</location>
        <topology evidence="2">Multi-pass membrane protein</topology>
    </subcellularLocation>
    <subcellularLocation>
        <location evidence="6">Cell membrane</location>
        <topology evidence="2">Multi-pass membrane protein</topology>
    </subcellularLocation>
</comment>
<comment type="tissue specificity">
    <text evidence="4">Expressed in luminal membrane of renal tubules (at protein level) (PubMed:18638446). Detected in all tissues tested with higher expression in heart, splee, kidney, leukocytes and prostate (PubMed:18638446).</text>
</comment>
<comment type="similarity">
    <text evidence="2">Belongs to the major facilitator superfamily.</text>
</comment>
<reference evidence="7" key="1">
    <citation type="journal article" date="1993" name="Hum. Mol. Genet.">
        <title>A gene from chromosome 4p16.3 with similarity to a superfamily of transporter proteins.</title>
        <authorList>
            <person name="Duyao M.P."/>
            <person name="Taylor S.A.M."/>
            <person name="Buckler A.J."/>
            <person name="Ambrose C.M."/>
            <person name="Lin C."/>
            <person name="Groot N."/>
            <person name="Church D."/>
            <person name="Barnes G."/>
            <person name="Wasmuth J.J."/>
            <person name="Housman D.E."/>
            <person name="MacDonald M.E."/>
            <person name="Gusella J.F."/>
        </authorList>
    </citation>
    <scope>NUCLEOTIDE SEQUENCE [MRNA]</scope>
    <source>
        <tissue evidence="7">Frontal cortex</tissue>
    </source>
</reference>
<reference evidence="10" key="2">
    <citation type="journal article" date="2005" name="Nature">
        <title>Generation and annotation of the DNA sequences of human chromosomes 2 and 4.</title>
        <authorList>
            <person name="Hillier L.W."/>
            <person name="Graves T.A."/>
            <person name="Fulton R.S."/>
            <person name="Fulton L.A."/>
            <person name="Pepin K.H."/>
            <person name="Minx P."/>
            <person name="Wagner-McPherson C."/>
            <person name="Layman D."/>
            <person name="Wylie K."/>
            <person name="Sekhon M."/>
            <person name="Becker M.C."/>
            <person name="Fewell G.A."/>
            <person name="Delehaunty K.D."/>
            <person name="Miner T.L."/>
            <person name="Nash W.E."/>
            <person name="Kremitzki C."/>
            <person name="Oddy L."/>
            <person name="Du H."/>
            <person name="Sun H."/>
            <person name="Bradshaw-Cordum H."/>
            <person name="Ali J."/>
            <person name="Carter J."/>
            <person name="Cordes M."/>
            <person name="Harris A."/>
            <person name="Isak A."/>
            <person name="van Brunt A."/>
            <person name="Nguyen C."/>
            <person name="Du F."/>
            <person name="Courtney L."/>
            <person name="Kalicki J."/>
            <person name="Ozersky P."/>
            <person name="Abbott S."/>
            <person name="Armstrong J."/>
            <person name="Belter E.A."/>
            <person name="Caruso L."/>
            <person name="Cedroni M."/>
            <person name="Cotton M."/>
            <person name="Davidson T."/>
            <person name="Desai A."/>
            <person name="Elliott G."/>
            <person name="Erb T."/>
            <person name="Fronick C."/>
            <person name="Gaige T."/>
            <person name="Haakenson W."/>
            <person name="Haglund K."/>
            <person name="Holmes A."/>
            <person name="Harkins R."/>
            <person name="Kim K."/>
            <person name="Kruchowski S.S."/>
            <person name="Strong C.M."/>
            <person name="Grewal N."/>
            <person name="Goyea E."/>
            <person name="Hou S."/>
            <person name="Levy A."/>
            <person name="Martinka S."/>
            <person name="Mead K."/>
            <person name="McLellan M.D."/>
            <person name="Meyer R."/>
            <person name="Randall-Maher J."/>
            <person name="Tomlinson C."/>
            <person name="Dauphin-Kohlberg S."/>
            <person name="Kozlowicz-Reilly A."/>
            <person name="Shah N."/>
            <person name="Swearengen-Shahid S."/>
            <person name="Snider J."/>
            <person name="Strong J.T."/>
            <person name="Thompson J."/>
            <person name="Yoakum M."/>
            <person name="Leonard S."/>
            <person name="Pearman C."/>
            <person name="Trani L."/>
            <person name="Radionenko M."/>
            <person name="Waligorski J.E."/>
            <person name="Wang C."/>
            <person name="Rock S.M."/>
            <person name="Tin-Wollam A.-M."/>
            <person name="Maupin R."/>
            <person name="Latreille P."/>
            <person name="Wendl M.C."/>
            <person name="Yang S.-P."/>
            <person name="Pohl C."/>
            <person name="Wallis J.W."/>
            <person name="Spieth J."/>
            <person name="Bieri T.A."/>
            <person name="Berkowicz N."/>
            <person name="Nelson J.O."/>
            <person name="Osborne J."/>
            <person name="Ding L."/>
            <person name="Meyer R."/>
            <person name="Sabo A."/>
            <person name="Shotland Y."/>
            <person name="Sinha P."/>
            <person name="Wohldmann P.E."/>
            <person name="Cook L.L."/>
            <person name="Hickenbotham M.T."/>
            <person name="Eldred J."/>
            <person name="Williams D."/>
            <person name="Jones T.A."/>
            <person name="She X."/>
            <person name="Ciccarelli F.D."/>
            <person name="Izaurralde E."/>
            <person name="Taylor J."/>
            <person name="Schmutz J."/>
            <person name="Myers R.M."/>
            <person name="Cox D.R."/>
            <person name="Huang X."/>
            <person name="McPherson J.D."/>
            <person name="Mardis E.R."/>
            <person name="Clifton S.W."/>
            <person name="Warren W.C."/>
            <person name="Chinwalla A.T."/>
            <person name="Eddy S.R."/>
            <person name="Marra M.A."/>
            <person name="Ovcharenko I."/>
            <person name="Furey T.S."/>
            <person name="Miller W."/>
            <person name="Eichler E.E."/>
            <person name="Bork P."/>
            <person name="Suyama M."/>
            <person name="Torrents D."/>
            <person name="Waterston R.H."/>
            <person name="Wilson R.K."/>
        </authorList>
    </citation>
    <scope>NUCLEOTIDE SEQUENCE [LARGE SCALE GENOMIC DNA]</scope>
</reference>
<reference evidence="11" key="3">
    <citation type="submission" date="2005-09" db="EMBL/GenBank/DDBJ databases">
        <authorList>
            <person name="Mural R.J."/>
            <person name="Istrail S."/>
            <person name="Sutton G.G."/>
            <person name="Florea L."/>
            <person name="Halpern A.L."/>
            <person name="Mobarry C.M."/>
            <person name="Lippert R."/>
            <person name="Walenz B."/>
            <person name="Shatkay H."/>
            <person name="Dew I."/>
            <person name="Miller J.R."/>
            <person name="Flanigan M.J."/>
            <person name="Edwards N.J."/>
            <person name="Bolanos R."/>
            <person name="Fasulo D."/>
            <person name="Halldorsson B.V."/>
            <person name="Hannenhalli S."/>
            <person name="Turner R."/>
            <person name="Yooseph S."/>
            <person name="Lu F."/>
            <person name="Nusskern D.R."/>
            <person name="Shue B.C."/>
            <person name="Zheng X.H."/>
            <person name="Zhong F."/>
            <person name="Delcher A.L."/>
            <person name="Huson D.H."/>
            <person name="Kravitz S.A."/>
            <person name="Mouchard L."/>
            <person name="Reinert K."/>
            <person name="Remington K.A."/>
            <person name="Clark A.G."/>
            <person name="Waterman M.S."/>
            <person name="Eichler E.E."/>
            <person name="Adams M.D."/>
            <person name="Hunkapiller M.W."/>
            <person name="Myers E.W."/>
            <person name="Venter J.C."/>
        </authorList>
    </citation>
    <scope>NUCLEOTIDE SEQUENCE [LARGE SCALE GENOMIC DNA]</scope>
</reference>
<reference evidence="8" key="4">
    <citation type="journal article" date="2004" name="Genome Res.">
        <title>The status, quality, and expansion of the NIH full-length cDNA project: the Mammalian Gene Collection (MGC).</title>
        <authorList>
            <consortium name="The MGC Project Team"/>
        </authorList>
    </citation>
    <scope>NUCLEOTIDE SEQUENCE [LARGE SCALE MRNA]</scope>
    <source>
        <tissue evidence="9">B-cell</tissue>
        <tissue evidence="8">Colon</tissue>
    </source>
</reference>
<reference evidence="5" key="5">
    <citation type="journal article" date="2007" name="FEBS Lett.">
        <title>Identification of the TPO1 gene in yeast, and its human orthologue TETRAN, which cause resistance to NSAIDs.</title>
        <authorList>
            <person name="Mima S."/>
            <person name="Ushijima H."/>
            <person name="Hwang H.-J."/>
            <person name="Tsutsumi S."/>
            <person name="Makise M."/>
            <person name="Yamaguchi Y."/>
            <person name="Tsuchiya T."/>
            <person name="Mizushima H."/>
            <person name="Mizushima T."/>
        </authorList>
    </citation>
    <scope>FUNCTION</scope>
</reference>
<reference key="6">
    <citation type="journal article" date="2008" name="Biochem. Biophys. Res. Commun.">
        <title>Expression and function of TETRAN, a new type of membrane transporter.</title>
        <authorList>
            <person name="Ushijima H."/>
            <person name="Hiasa M."/>
            <person name="Namba T."/>
            <person name="Hwang H.J."/>
            <person name="Hoshino T."/>
            <person name="Mima S."/>
            <person name="Tsuchiya T."/>
            <person name="Moriyama Y."/>
            <person name="Mizushima T."/>
        </authorList>
    </citation>
    <scope>FUNCTION</scope>
    <scope>TISSUE SPECIFICITY</scope>
    <scope>SUBCELLULAR LOCATION</scope>
    <scope>BIOPHYSICOCHEMICAL PROPERTIES</scope>
</reference>
<reference key="7">
    <citation type="journal article" date="2015" name="Proteomics">
        <title>N-terminome analysis of the human mitochondrial proteome.</title>
        <authorList>
            <person name="Vaca Jacome A.S."/>
            <person name="Rabilloud T."/>
            <person name="Schaeffer-Reiss C."/>
            <person name="Rompais M."/>
            <person name="Ayoub D."/>
            <person name="Lane L."/>
            <person name="Bairoch A."/>
            <person name="Van Dorsselaer A."/>
            <person name="Carapito C."/>
        </authorList>
    </citation>
    <scope>IDENTIFICATION BY MASS SPECTROMETRY [LARGE SCALE ANALYSIS]</scope>
</reference>
<reference evidence="12" key="8">
    <citation type="submission" date="2019-06" db="PDB data bank">
        <title>Crystal structure of the human organic anion transporter TETRAN (MFSD10).</title>
        <authorList>
            <person name="Pascoa T.C."/>
            <person name="Pike A.C.W."/>
            <person name="Bushell S.R."/>
            <person name="Quigley A."/>
            <person name="Chu A."/>
            <person name="Mukhopadhyay S.M.M."/>
            <person name="Shrestha L."/>
            <person name="Venkaya S."/>
            <person name="Chalk R."/>
            <person name="Burgess-Brown N.A."/>
            <person name="Edwards A.M."/>
            <person name="Arrowsmith C.H."/>
            <person name="Bountra C."/>
            <person name="Carpenter E.P."/>
        </authorList>
    </citation>
    <scope>X-RAY CRYSTALLOGRAPHY (2.40 ANGSTROMS) OF 1-444</scope>
</reference>
<dbReference type="EMBL" id="L11669">
    <property type="protein sequence ID" value="AAA36729.1"/>
    <property type="molecule type" value="mRNA"/>
</dbReference>
<dbReference type="EMBL" id="AL390065">
    <property type="status" value="NOT_ANNOTATED_CDS"/>
    <property type="molecule type" value="Genomic_DNA"/>
</dbReference>
<dbReference type="EMBL" id="CH471131">
    <property type="protein sequence ID" value="EAW82496.1"/>
    <property type="molecule type" value="Genomic_DNA"/>
</dbReference>
<dbReference type="EMBL" id="BC001502">
    <property type="protein sequence ID" value="AAH01502.1"/>
    <property type="molecule type" value="mRNA"/>
</dbReference>
<dbReference type="EMBL" id="BC014979">
    <property type="protein sequence ID" value="AAH14979.1"/>
    <property type="molecule type" value="mRNA"/>
</dbReference>
<dbReference type="CCDS" id="CCDS3365.1"/>
<dbReference type="PIR" id="I54353">
    <property type="entry name" value="I54353"/>
</dbReference>
<dbReference type="RefSeq" id="NP_001111.3">
    <property type="nucleotide sequence ID" value="NM_001120.4"/>
</dbReference>
<dbReference type="RefSeq" id="NP_001139541.1">
    <property type="nucleotide sequence ID" value="NM_001146069.2"/>
</dbReference>
<dbReference type="PDB" id="6S4M">
    <property type="method" value="X-ray"/>
    <property type="resolution" value="2.40 A"/>
    <property type="chains" value="A=1-444"/>
</dbReference>
<dbReference type="PDBsum" id="6S4M"/>
<dbReference type="SMR" id="Q14728"/>
<dbReference type="BioGRID" id="115521">
    <property type="interactions" value="36"/>
</dbReference>
<dbReference type="FunCoup" id="Q14728">
    <property type="interactions" value="220"/>
</dbReference>
<dbReference type="IntAct" id="Q14728">
    <property type="interactions" value="15"/>
</dbReference>
<dbReference type="MINT" id="Q14728"/>
<dbReference type="STRING" id="9606.ENSP00000332646"/>
<dbReference type="iPTMnet" id="Q14728"/>
<dbReference type="PhosphoSitePlus" id="Q14728"/>
<dbReference type="SwissPalm" id="Q14728"/>
<dbReference type="BioMuta" id="MFSD10"/>
<dbReference type="DMDM" id="74735668"/>
<dbReference type="jPOST" id="Q14728"/>
<dbReference type="MassIVE" id="Q14728"/>
<dbReference type="PaxDb" id="9606-ENSP00000332646"/>
<dbReference type="PeptideAtlas" id="Q14728"/>
<dbReference type="ProteomicsDB" id="60148"/>
<dbReference type="Pumba" id="Q14728"/>
<dbReference type="Antibodypedia" id="8956">
    <property type="antibodies" value="75 antibodies from 20 providers"/>
</dbReference>
<dbReference type="DNASU" id="10227"/>
<dbReference type="Ensembl" id="ENST00000329687.8">
    <property type="protein sequence ID" value="ENSP00000332646.4"/>
    <property type="gene ID" value="ENSG00000109736.15"/>
</dbReference>
<dbReference type="Ensembl" id="ENST00000355443.9">
    <property type="protein sequence ID" value="ENSP00000347619.4"/>
    <property type="gene ID" value="ENSG00000109736.15"/>
</dbReference>
<dbReference type="GeneID" id="10227"/>
<dbReference type="KEGG" id="hsa:10227"/>
<dbReference type="MANE-Select" id="ENST00000355443.9">
    <property type="protein sequence ID" value="ENSP00000347619.4"/>
    <property type="RefSeq nucleotide sequence ID" value="NM_001146069.2"/>
    <property type="RefSeq protein sequence ID" value="NP_001139541.1"/>
</dbReference>
<dbReference type="UCSC" id="uc003gfw.4">
    <property type="organism name" value="human"/>
</dbReference>
<dbReference type="AGR" id="HGNC:16894"/>
<dbReference type="CTD" id="10227"/>
<dbReference type="GeneCards" id="MFSD10"/>
<dbReference type="HGNC" id="HGNC:16894">
    <property type="gene designation" value="MFSD10"/>
</dbReference>
<dbReference type="HPA" id="ENSG00000109736">
    <property type="expression patterns" value="Low tissue specificity"/>
</dbReference>
<dbReference type="MIM" id="610977">
    <property type="type" value="gene"/>
</dbReference>
<dbReference type="neXtProt" id="NX_Q14728"/>
<dbReference type="OpenTargets" id="ENSG00000109736"/>
<dbReference type="PharmGKB" id="PA162395840"/>
<dbReference type="VEuPathDB" id="HostDB:ENSG00000109736"/>
<dbReference type="eggNOG" id="KOG2615">
    <property type="taxonomic scope" value="Eukaryota"/>
</dbReference>
<dbReference type="GeneTree" id="ENSGT00940000164295"/>
<dbReference type="InParanoid" id="Q14728"/>
<dbReference type="OMA" id="EWYVNIS"/>
<dbReference type="OrthoDB" id="196650at2759"/>
<dbReference type="PAN-GO" id="Q14728">
    <property type="GO annotations" value="1 GO annotation based on evolutionary models"/>
</dbReference>
<dbReference type="PhylomeDB" id="Q14728"/>
<dbReference type="TreeFam" id="TF314512"/>
<dbReference type="PathwayCommons" id="Q14728"/>
<dbReference type="SignaLink" id="Q14728"/>
<dbReference type="BioGRID-ORCS" id="10227">
    <property type="hits" value="15 hits in 1154 CRISPR screens"/>
</dbReference>
<dbReference type="ChiTaRS" id="MFSD10">
    <property type="organism name" value="human"/>
</dbReference>
<dbReference type="GenomeRNAi" id="10227"/>
<dbReference type="Pharos" id="Q14728">
    <property type="development level" value="Tbio"/>
</dbReference>
<dbReference type="PRO" id="PR:Q14728"/>
<dbReference type="Proteomes" id="UP000005640">
    <property type="component" value="Chromosome 4"/>
</dbReference>
<dbReference type="RNAct" id="Q14728">
    <property type="molecule type" value="protein"/>
</dbReference>
<dbReference type="Bgee" id="ENSG00000109736">
    <property type="expression patterns" value="Expressed in right uterine tube and 187 other cell types or tissues"/>
</dbReference>
<dbReference type="ExpressionAtlas" id="Q14728">
    <property type="expression patterns" value="baseline and differential"/>
</dbReference>
<dbReference type="GO" id="GO:0031526">
    <property type="term" value="C:brush border membrane"/>
    <property type="evidence" value="ECO:0000318"/>
    <property type="project" value="GO_Central"/>
</dbReference>
<dbReference type="GO" id="GO:0030659">
    <property type="term" value="C:cytoplasmic vesicle membrane"/>
    <property type="evidence" value="ECO:0000314"/>
    <property type="project" value="MGI"/>
</dbReference>
<dbReference type="GO" id="GO:0016020">
    <property type="term" value="C:membrane"/>
    <property type="evidence" value="ECO:0000304"/>
    <property type="project" value="ProtInc"/>
</dbReference>
<dbReference type="GO" id="GO:0005637">
    <property type="term" value="C:nuclear inner membrane"/>
    <property type="evidence" value="ECO:0000250"/>
    <property type="project" value="UniProtKB"/>
</dbReference>
<dbReference type="GO" id="GO:0008514">
    <property type="term" value="F:organic anion transmembrane transporter activity"/>
    <property type="evidence" value="ECO:0000314"/>
    <property type="project" value="MGI"/>
</dbReference>
<dbReference type="GO" id="GO:0008493">
    <property type="term" value="F:tetracycline transmembrane transporter activity"/>
    <property type="evidence" value="ECO:0000304"/>
    <property type="project" value="ProtInc"/>
</dbReference>
<dbReference type="GO" id="GO:0006915">
    <property type="term" value="P:apoptotic process"/>
    <property type="evidence" value="ECO:0007669"/>
    <property type="project" value="UniProtKB-KW"/>
</dbReference>
<dbReference type="GO" id="GO:0043252">
    <property type="term" value="P:sodium-independent organic anion transport"/>
    <property type="evidence" value="ECO:0000314"/>
    <property type="project" value="MGI"/>
</dbReference>
<dbReference type="FunFam" id="1.20.1250.20:FF:000181">
    <property type="entry name" value="Major facilitator superfamily domain-containing protein 10"/>
    <property type="match status" value="1"/>
</dbReference>
<dbReference type="Gene3D" id="1.20.1250.20">
    <property type="entry name" value="MFS general substrate transporter like domains"/>
    <property type="match status" value="1"/>
</dbReference>
<dbReference type="InterPro" id="IPR011701">
    <property type="entry name" value="MFS"/>
</dbReference>
<dbReference type="InterPro" id="IPR020846">
    <property type="entry name" value="MFS_dom"/>
</dbReference>
<dbReference type="InterPro" id="IPR036259">
    <property type="entry name" value="MFS_trans_sf"/>
</dbReference>
<dbReference type="PANTHER" id="PTHR23504">
    <property type="entry name" value="MAJOR FACILITATOR SUPERFAMILY DOMAIN-CONTAINING PROTEIN 10"/>
    <property type="match status" value="1"/>
</dbReference>
<dbReference type="PANTHER" id="PTHR23504:SF31">
    <property type="entry name" value="MAJOR FACILITATOR SUPERFAMILY DOMAIN-CONTAINING PROTEIN 10"/>
    <property type="match status" value="1"/>
</dbReference>
<dbReference type="Pfam" id="PF07690">
    <property type="entry name" value="MFS_1"/>
    <property type="match status" value="1"/>
</dbReference>
<dbReference type="SUPFAM" id="SSF103473">
    <property type="entry name" value="MFS general substrate transporter"/>
    <property type="match status" value="1"/>
</dbReference>
<dbReference type="PROSITE" id="PS50850">
    <property type="entry name" value="MFS"/>
    <property type="match status" value="1"/>
</dbReference>
<protein>
    <recommendedName>
        <fullName>Major facilitator superfamily domain-containing protein 10</fullName>
    </recommendedName>
    <alternativeName>
        <fullName>Tetracycline transporter-like protein</fullName>
    </alternativeName>
</protein>